<gene>
    <name evidence="1" type="primary">rsmH</name>
    <name type="synonym">mraW</name>
    <name type="ordered locus">ECIAI39_0085</name>
</gene>
<name>RSMH_ECO7I</name>
<comment type="function">
    <text evidence="1">Specifically methylates the N4 position of cytidine in position 1402 (C1402) of 16S rRNA.</text>
</comment>
<comment type="catalytic activity">
    <reaction evidence="1">
        <text>cytidine(1402) in 16S rRNA + S-adenosyl-L-methionine = N(4)-methylcytidine(1402) in 16S rRNA + S-adenosyl-L-homocysteine + H(+)</text>
        <dbReference type="Rhea" id="RHEA:42928"/>
        <dbReference type="Rhea" id="RHEA-COMP:10286"/>
        <dbReference type="Rhea" id="RHEA-COMP:10287"/>
        <dbReference type="ChEBI" id="CHEBI:15378"/>
        <dbReference type="ChEBI" id="CHEBI:57856"/>
        <dbReference type="ChEBI" id="CHEBI:59789"/>
        <dbReference type="ChEBI" id="CHEBI:74506"/>
        <dbReference type="ChEBI" id="CHEBI:82748"/>
        <dbReference type="EC" id="2.1.1.199"/>
    </reaction>
</comment>
<comment type="subcellular location">
    <subcellularLocation>
        <location evidence="1">Cytoplasm</location>
    </subcellularLocation>
</comment>
<comment type="similarity">
    <text evidence="1">Belongs to the methyltransferase superfamily. RsmH family.</text>
</comment>
<proteinExistence type="inferred from homology"/>
<accession>B7NHI8</accession>
<keyword id="KW-0963">Cytoplasm</keyword>
<keyword id="KW-0489">Methyltransferase</keyword>
<keyword id="KW-0698">rRNA processing</keyword>
<keyword id="KW-0949">S-adenosyl-L-methionine</keyword>
<keyword id="KW-0808">Transferase</keyword>
<reference key="1">
    <citation type="journal article" date="2009" name="PLoS Genet.">
        <title>Organised genome dynamics in the Escherichia coli species results in highly diverse adaptive paths.</title>
        <authorList>
            <person name="Touchon M."/>
            <person name="Hoede C."/>
            <person name="Tenaillon O."/>
            <person name="Barbe V."/>
            <person name="Baeriswyl S."/>
            <person name="Bidet P."/>
            <person name="Bingen E."/>
            <person name="Bonacorsi S."/>
            <person name="Bouchier C."/>
            <person name="Bouvet O."/>
            <person name="Calteau A."/>
            <person name="Chiapello H."/>
            <person name="Clermont O."/>
            <person name="Cruveiller S."/>
            <person name="Danchin A."/>
            <person name="Diard M."/>
            <person name="Dossat C."/>
            <person name="Karoui M.E."/>
            <person name="Frapy E."/>
            <person name="Garry L."/>
            <person name="Ghigo J.M."/>
            <person name="Gilles A.M."/>
            <person name="Johnson J."/>
            <person name="Le Bouguenec C."/>
            <person name="Lescat M."/>
            <person name="Mangenot S."/>
            <person name="Martinez-Jehanne V."/>
            <person name="Matic I."/>
            <person name="Nassif X."/>
            <person name="Oztas S."/>
            <person name="Petit M.A."/>
            <person name="Pichon C."/>
            <person name="Rouy Z."/>
            <person name="Ruf C.S."/>
            <person name="Schneider D."/>
            <person name="Tourret J."/>
            <person name="Vacherie B."/>
            <person name="Vallenet D."/>
            <person name="Medigue C."/>
            <person name="Rocha E.P.C."/>
            <person name="Denamur E."/>
        </authorList>
    </citation>
    <scope>NUCLEOTIDE SEQUENCE [LARGE SCALE GENOMIC DNA]</scope>
    <source>
        <strain>IAI39 / ExPEC</strain>
    </source>
</reference>
<feature type="chain" id="PRO_0000386883" description="Ribosomal RNA small subunit methyltransferase H">
    <location>
        <begin position="1"/>
        <end position="313"/>
    </location>
</feature>
<feature type="binding site" evidence="1">
    <location>
        <begin position="35"/>
        <end position="37"/>
    </location>
    <ligand>
        <name>S-adenosyl-L-methionine</name>
        <dbReference type="ChEBI" id="CHEBI:59789"/>
    </ligand>
</feature>
<feature type="binding site" evidence="1">
    <location>
        <position position="55"/>
    </location>
    <ligand>
        <name>S-adenosyl-L-methionine</name>
        <dbReference type="ChEBI" id="CHEBI:59789"/>
    </ligand>
</feature>
<feature type="binding site" evidence="1">
    <location>
        <position position="79"/>
    </location>
    <ligand>
        <name>S-adenosyl-L-methionine</name>
        <dbReference type="ChEBI" id="CHEBI:59789"/>
    </ligand>
</feature>
<feature type="binding site" evidence="1">
    <location>
        <position position="101"/>
    </location>
    <ligand>
        <name>S-adenosyl-L-methionine</name>
        <dbReference type="ChEBI" id="CHEBI:59789"/>
    </ligand>
</feature>
<feature type="binding site" evidence="1">
    <location>
        <position position="108"/>
    </location>
    <ligand>
        <name>S-adenosyl-L-methionine</name>
        <dbReference type="ChEBI" id="CHEBI:59789"/>
    </ligand>
</feature>
<protein>
    <recommendedName>
        <fullName evidence="1">Ribosomal RNA small subunit methyltransferase H</fullName>
        <ecNumber evidence="1">2.1.1.199</ecNumber>
    </recommendedName>
    <alternativeName>
        <fullName evidence="1">16S rRNA m(4)C1402 methyltransferase</fullName>
    </alternativeName>
    <alternativeName>
        <fullName evidence="1">rRNA (cytosine-N(4)-)-methyltransferase RsmH</fullName>
    </alternativeName>
</protein>
<organism>
    <name type="scientific">Escherichia coli O7:K1 (strain IAI39 / ExPEC)</name>
    <dbReference type="NCBI Taxonomy" id="585057"/>
    <lineage>
        <taxon>Bacteria</taxon>
        <taxon>Pseudomonadati</taxon>
        <taxon>Pseudomonadota</taxon>
        <taxon>Gammaproteobacteria</taxon>
        <taxon>Enterobacterales</taxon>
        <taxon>Enterobacteriaceae</taxon>
        <taxon>Escherichia</taxon>
    </lineage>
</organism>
<sequence length="313" mass="34898">MMENYKHTTVLLDEAVNGLNIRPDGIYIDGTFGRGGHSRLILSQFGEEGRLLAIDRDPQAIAVAKTIDDPRFSIIHGPFSALGDYVAERDLIGKIDGILLDLGVSSPQLDDAERGFSFMRDGPLDMRMDPTRGQSAAEWLQTAEEADIAWVLKTYGEERFAKRIARAIVERNREQPMTRTKELAEVVAAATPVKDKFKHPATRTFQAVRIWVNSELEEIEQALKSSLNVLAPGGRLSIISFHSLEDRIVKRFMRENSRGPQVPAGLPMTEEQLKKLGGRQLRALGKLMPGEEEVAENPRARSSVLRIAERTNA</sequence>
<dbReference type="EC" id="2.1.1.199" evidence="1"/>
<dbReference type="EMBL" id="CU928164">
    <property type="protein sequence ID" value="CAR16226.1"/>
    <property type="molecule type" value="Genomic_DNA"/>
</dbReference>
<dbReference type="RefSeq" id="WP_000970463.1">
    <property type="nucleotide sequence ID" value="NC_011750.1"/>
</dbReference>
<dbReference type="RefSeq" id="YP_002406134.1">
    <property type="nucleotide sequence ID" value="NC_011750.1"/>
</dbReference>
<dbReference type="SMR" id="B7NHI8"/>
<dbReference type="STRING" id="585057.ECIAI39_0085"/>
<dbReference type="KEGG" id="ect:ECIAI39_0085"/>
<dbReference type="PATRIC" id="fig|585057.6.peg.94"/>
<dbReference type="HOGENOM" id="CLU_038422_2_0_6"/>
<dbReference type="Proteomes" id="UP000000749">
    <property type="component" value="Chromosome"/>
</dbReference>
<dbReference type="GO" id="GO:0005737">
    <property type="term" value="C:cytoplasm"/>
    <property type="evidence" value="ECO:0007669"/>
    <property type="project" value="UniProtKB-SubCell"/>
</dbReference>
<dbReference type="GO" id="GO:0071424">
    <property type="term" value="F:rRNA (cytosine-N4-)-methyltransferase activity"/>
    <property type="evidence" value="ECO:0007669"/>
    <property type="project" value="UniProtKB-UniRule"/>
</dbReference>
<dbReference type="GO" id="GO:0070475">
    <property type="term" value="P:rRNA base methylation"/>
    <property type="evidence" value="ECO:0007669"/>
    <property type="project" value="UniProtKB-UniRule"/>
</dbReference>
<dbReference type="FunFam" id="1.10.150.170:FF:000001">
    <property type="entry name" value="Ribosomal RNA small subunit methyltransferase H"/>
    <property type="match status" value="1"/>
</dbReference>
<dbReference type="Gene3D" id="1.10.150.170">
    <property type="entry name" value="Putative methyltransferase TM0872, insert domain"/>
    <property type="match status" value="1"/>
</dbReference>
<dbReference type="Gene3D" id="3.40.50.150">
    <property type="entry name" value="Vaccinia Virus protein VP39"/>
    <property type="match status" value="1"/>
</dbReference>
<dbReference type="HAMAP" id="MF_01007">
    <property type="entry name" value="16SrRNA_methyltr_H"/>
    <property type="match status" value="1"/>
</dbReference>
<dbReference type="InterPro" id="IPR002903">
    <property type="entry name" value="RsmH"/>
</dbReference>
<dbReference type="InterPro" id="IPR023397">
    <property type="entry name" value="SAM-dep_MeTrfase_MraW_recog"/>
</dbReference>
<dbReference type="InterPro" id="IPR029063">
    <property type="entry name" value="SAM-dependent_MTases_sf"/>
</dbReference>
<dbReference type="NCBIfam" id="TIGR00006">
    <property type="entry name" value="16S rRNA (cytosine(1402)-N(4))-methyltransferase RsmH"/>
    <property type="match status" value="1"/>
</dbReference>
<dbReference type="PANTHER" id="PTHR11265:SF0">
    <property type="entry name" value="12S RRNA N4-METHYLCYTIDINE METHYLTRANSFERASE"/>
    <property type="match status" value="1"/>
</dbReference>
<dbReference type="PANTHER" id="PTHR11265">
    <property type="entry name" value="S-ADENOSYL-METHYLTRANSFERASE MRAW"/>
    <property type="match status" value="1"/>
</dbReference>
<dbReference type="Pfam" id="PF01795">
    <property type="entry name" value="Methyltransf_5"/>
    <property type="match status" value="1"/>
</dbReference>
<dbReference type="PIRSF" id="PIRSF004486">
    <property type="entry name" value="MraW"/>
    <property type="match status" value="1"/>
</dbReference>
<dbReference type="SUPFAM" id="SSF81799">
    <property type="entry name" value="Putative methyltransferase TM0872, insert domain"/>
    <property type="match status" value="1"/>
</dbReference>
<dbReference type="SUPFAM" id="SSF53335">
    <property type="entry name" value="S-adenosyl-L-methionine-dependent methyltransferases"/>
    <property type="match status" value="1"/>
</dbReference>
<evidence type="ECO:0000255" key="1">
    <source>
        <dbReference type="HAMAP-Rule" id="MF_01007"/>
    </source>
</evidence>